<sequence length="911" mass="105015">MITAKKHPLDNCQLFVQLKKLFHDYNEKVQRLKDMIYWSGNDEHIAKICDQVTDLLVEHDLIIQPPDTMDPCAMNHLRGLLVYLVLNTAHDDIQCESQWSANVMHLCNQLPPIPLFLTIAIAVNCCLMEPLEEFLACGPRWLTIQYFEAFNEALSVINSDCVETLPLLSAALRAAGRAIVNCNLPAENKQLLRQIACMEHRHILDSKQRLHTLPRPSTRKIYLAKAMDHLIEVLLYTLNDPLKREKPNCFAVYSQITEDISDSNSSDPMPDLRHFAQILLDVLQRIFQLVSVDTYMYWHEMKSKSALYNCQELICRQTAELLKVLQSDKLLGEHPVCKQMQSFADAAKTLEQRVAEMRIGELLAFIDSGMATNEELLAGLDNLFSRFIAFGSDECLETMANHLIMLTKKHAQIILSFLGQVVESEMVVEDEGISVTEVNQGDDEDETSSNDDYEELLSLVLRPLFMQLNVEDKMEVLLLRDEQNVTQGFNFKAPDHRERRIRFFNQLDYNKRFPITEFLVLCFENARQTWIDFSHLGVTHTRFSKLFWHIAQSCPKHAAFHISACADNILVNEQLLQKPYALQFTLYLYGHRQILNGLYTSARQLCVSLKDGRCPYGEDELRQAQNRFLDACAYGLAKFIEPMNLPSLQLILKLLKQISLGESNLITRGTAELNALEKEHPKLENGDDAPAVKVAKHYTYLHASLPEWRLKHWKLISHVMKTIDALRWDLATFEDFRVDNLELAVWYWQDGLSHLTFLGTEFRQRILNQVSKLKHKDFWIIYLKEDTLKDTRSFLKLLTQSSAQEANDLFNKLLKKRADCAVMGDLSDAVVKVNSESAFMAFRFLFREYLIAFRSHAKHNKTITKRQHWDHLMAVVAKAPFSIRNEIMELASKAFAVRFGINIQEQQAAKC</sequence>
<evidence type="ECO:0000269" key="1">
    <source>
    </source>
</evidence>
<evidence type="ECO:0000269" key="2">
    <source>
    </source>
</evidence>
<evidence type="ECO:0000269" key="3">
    <source>
    </source>
</evidence>
<evidence type="ECO:0000303" key="4">
    <source>
    </source>
</evidence>
<evidence type="ECO:0000303" key="5">
    <source>
    </source>
</evidence>
<evidence type="ECO:0000305" key="6"/>
<evidence type="ECO:0000312" key="7">
    <source>
        <dbReference type="EMBL" id="AAM50978.1"/>
    </source>
</evidence>
<evidence type="ECO:0000312" key="8">
    <source>
        <dbReference type="FlyBase" id="FBgn0029686"/>
    </source>
</evidence>
<evidence type="ECO:0000312" key="9">
    <source>
        <dbReference type="Proteomes" id="UP000000803"/>
    </source>
</evidence>
<protein>
    <recommendedName>
        <fullName evidence="6">Gem-associated protein 4a</fullName>
        <shortName evidence="5">Gemin4a</shortName>
    </recommendedName>
    <alternativeName>
        <fullName evidence="4 8">Protein Gaulos</fullName>
    </alternativeName>
</protein>
<proteinExistence type="evidence at protein level"/>
<reference evidence="9" key="1">
    <citation type="journal article" date="2000" name="Science">
        <title>The genome sequence of Drosophila melanogaster.</title>
        <authorList>
            <person name="Adams M.D."/>
            <person name="Celniker S.E."/>
            <person name="Holt R.A."/>
            <person name="Evans C.A."/>
            <person name="Gocayne J.D."/>
            <person name="Amanatides P.G."/>
            <person name="Scherer S.E."/>
            <person name="Li P.W."/>
            <person name="Hoskins R.A."/>
            <person name="Galle R.F."/>
            <person name="George R.A."/>
            <person name="Lewis S.E."/>
            <person name="Richards S."/>
            <person name="Ashburner M."/>
            <person name="Henderson S.N."/>
            <person name="Sutton G.G."/>
            <person name="Wortman J.R."/>
            <person name="Yandell M.D."/>
            <person name="Zhang Q."/>
            <person name="Chen L.X."/>
            <person name="Brandon R.C."/>
            <person name="Rogers Y.-H.C."/>
            <person name="Blazej R.G."/>
            <person name="Champe M."/>
            <person name="Pfeiffer B.D."/>
            <person name="Wan K.H."/>
            <person name="Doyle C."/>
            <person name="Baxter E.G."/>
            <person name="Helt G."/>
            <person name="Nelson C.R."/>
            <person name="Miklos G.L.G."/>
            <person name="Abril J.F."/>
            <person name="Agbayani A."/>
            <person name="An H.-J."/>
            <person name="Andrews-Pfannkoch C."/>
            <person name="Baldwin D."/>
            <person name="Ballew R.M."/>
            <person name="Basu A."/>
            <person name="Baxendale J."/>
            <person name="Bayraktaroglu L."/>
            <person name="Beasley E.M."/>
            <person name="Beeson K.Y."/>
            <person name="Benos P.V."/>
            <person name="Berman B.P."/>
            <person name="Bhandari D."/>
            <person name="Bolshakov S."/>
            <person name="Borkova D."/>
            <person name="Botchan M.R."/>
            <person name="Bouck J."/>
            <person name="Brokstein P."/>
            <person name="Brottier P."/>
            <person name="Burtis K.C."/>
            <person name="Busam D.A."/>
            <person name="Butler H."/>
            <person name="Cadieu E."/>
            <person name="Center A."/>
            <person name="Chandra I."/>
            <person name="Cherry J.M."/>
            <person name="Cawley S."/>
            <person name="Dahlke C."/>
            <person name="Davenport L.B."/>
            <person name="Davies P."/>
            <person name="de Pablos B."/>
            <person name="Delcher A."/>
            <person name="Deng Z."/>
            <person name="Mays A.D."/>
            <person name="Dew I."/>
            <person name="Dietz S.M."/>
            <person name="Dodson K."/>
            <person name="Doup L.E."/>
            <person name="Downes M."/>
            <person name="Dugan-Rocha S."/>
            <person name="Dunkov B.C."/>
            <person name="Dunn P."/>
            <person name="Durbin K.J."/>
            <person name="Evangelista C.C."/>
            <person name="Ferraz C."/>
            <person name="Ferriera S."/>
            <person name="Fleischmann W."/>
            <person name="Fosler C."/>
            <person name="Gabrielian A.E."/>
            <person name="Garg N.S."/>
            <person name="Gelbart W.M."/>
            <person name="Glasser K."/>
            <person name="Glodek A."/>
            <person name="Gong F."/>
            <person name="Gorrell J.H."/>
            <person name="Gu Z."/>
            <person name="Guan P."/>
            <person name="Harris M."/>
            <person name="Harris N.L."/>
            <person name="Harvey D.A."/>
            <person name="Heiman T.J."/>
            <person name="Hernandez J.R."/>
            <person name="Houck J."/>
            <person name="Hostin D."/>
            <person name="Houston K.A."/>
            <person name="Howland T.J."/>
            <person name="Wei M.-H."/>
            <person name="Ibegwam C."/>
            <person name="Jalali M."/>
            <person name="Kalush F."/>
            <person name="Karpen G.H."/>
            <person name="Ke Z."/>
            <person name="Kennison J.A."/>
            <person name="Ketchum K.A."/>
            <person name="Kimmel B.E."/>
            <person name="Kodira C.D."/>
            <person name="Kraft C.L."/>
            <person name="Kravitz S."/>
            <person name="Kulp D."/>
            <person name="Lai Z."/>
            <person name="Lasko P."/>
            <person name="Lei Y."/>
            <person name="Levitsky A.A."/>
            <person name="Li J.H."/>
            <person name="Li Z."/>
            <person name="Liang Y."/>
            <person name="Lin X."/>
            <person name="Liu X."/>
            <person name="Mattei B."/>
            <person name="McIntosh T.C."/>
            <person name="McLeod M.P."/>
            <person name="McPherson D."/>
            <person name="Merkulov G."/>
            <person name="Milshina N.V."/>
            <person name="Mobarry C."/>
            <person name="Morris J."/>
            <person name="Moshrefi A."/>
            <person name="Mount S.M."/>
            <person name="Moy M."/>
            <person name="Murphy B."/>
            <person name="Murphy L."/>
            <person name="Muzny D.M."/>
            <person name="Nelson D.L."/>
            <person name="Nelson D.R."/>
            <person name="Nelson K.A."/>
            <person name="Nixon K."/>
            <person name="Nusskern D.R."/>
            <person name="Pacleb J.M."/>
            <person name="Palazzolo M."/>
            <person name="Pittman G.S."/>
            <person name="Pan S."/>
            <person name="Pollard J."/>
            <person name="Puri V."/>
            <person name="Reese M.G."/>
            <person name="Reinert K."/>
            <person name="Remington K."/>
            <person name="Saunders R.D.C."/>
            <person name="Scheeler F."/>
            <person name="Shen H."/>
            <person name="Shue B.C."/>
            <person name="Siden-Kiamos I."/>
            <person name="Simpson M."/>
            <person name="Skupski M.P."/>
            <person name="Smith T.J."/>
            <person name="Spier E."/>
            <person name="Spradling A.C."/>
            <person name="Stapleton M."/>
            <person name="Strong R."/>
            <person name="Sun E."/>
            <person name="Svirskas R."/>
            <person name="Tector C."/>
            <person name="Turner R."/>
            <person name="Venter E."/>
            <person name="Wang A.H."/>
            <person name="Wang X."/>
            <person name="Wang Z.-Y."/>
            <person name="Wassarman D.A."/>
            <person name="Weinstock G.M."/>
            <person name="Weissenbach J."/>
            <person name="Williams S.M."/>
            <person name="Woodage T."/>
            <person name="Worley K.C."/>
            <person name="Wu D."/>
            <person name="Yang S."/>
            <person name="Yao Q.A."/>
            <person name="Ye J."/>
            <person name="Yeh R.-F."/>
            <person name="Zaveri J.S."/>
            <person name="Zhan M."/>
            <person name="Zhang G."/>
            <person name="Zhao Q."/>
            <person name="Zheng L."/>
            <person name="Zheng X.H."/>
            <person name="Zhong F.N."/>
            <person name="Zhong W."/>
            <person name="Zhou X."/>
            <person name="Zhu S.C."/>
            <person name="Zhu X."/>
            <person name="Smith H.O."/>
            <person name="Gibbs R.A."/>
            <person name="Myers E.W."/>
            <person name="Rubin G.M."/>
            <person name="Venter J.C."/>
        </authorList>
    </citation>
    <scope>NUCLEOTIDE SEQUENCE [LARGE SCALE GENOMIC DNA]</scope>
    <source>
        <strain evidence="9">Berkeley</strain>
    </source>
</reference>
<reference evidence="9" key="2">
    <citation type="journal article" date="2002" name="Genome Biol.">
        <title>Annotation of the Drosophila melanogaster euchromatic genome: a systematic review.</title>
        <authorList>
            <person name="Misra S."/>
            <person name="Crosby M.A."/>
            <person name="Mungall C.J."/>
            <person name="Matthews B.B."/>
            <person name="Campbell K.S."/>
            <person name="Hradecky P."/>
            <person name="Huang Y."/>
            <person name="Kaminker J.S."/>
            <person name="Millburn G.H."/>
            <person name="Prochnik S.E."/>
            <person name="Smith C.D."/>
            <person name="Tupy J.L."/>
            <person name="Whitfield E.J."/>
            <person name="Bayraktaroglu L."/>
            <person name="Berman B.P."/>
            <person name="Bettencourt B.R."/>
            <person name="Celniker S.E."/>
            <person name="de Grey A.D.N.J."/>
            <person name="Drysdale R.A."/>
            <person name="Harris N.L."/>
            <person name="Richter J."/>
            <person name="Russo S."/>
            <person name="Schroeder A.J."/>
            <person name="Shu S.Q."/>
            <person name="Stapleton M."/>
            <person name="Yamada C."/>
            <person name="Ashburner M."/>
            <person name="Gelbart W.M."/>
            <person name="Rubin G.M."/>
            <person name="Lewis S.E."/>
        </authorList>
    </citation>
    <scope>GENOME REANNOTATION</scope>
    <source>
        <strain evidence="9">Berkeley</strain>
    </source>
</reference>
<reference evidence="7" key="3">
    <citation type="journal article" date="2002" name="Genome Biol.">
        <title>A Drosophila full-length cDNA resource.</title>
        <authorList>
            <person name="Stapleton M."/>
            <person name="Carlson J.W."/>
            <person name="Brokstein P."/>
            <person name="Yu C."/>
            <person name="Champe M."/>
            <person name="George R.A."/>
            <person name="Guarin H."/>
            <person name="Kronmiller B."/>
            <person name="Pacleb J.M."/>
            <person name="Park S."/>
            <person name="Wan K.H."/>
            <person name="Rubin G.M."/>
            <person name="Celniker S.E."/>
        </authorList>
    </citation>
    <scope>NUCLEOTIDE SEQUENCE [LARGE SCALE MRNA]</scope>
    <source>
        <strain evidence="7">Berkeley</strain>
        <tissue evidence="7">Embryo</tissue>
    </source>
</reference>
<reference evidence="6" key="4">
    <citation type="journal article" date="2017" name="FEBS Lett.">
        <title>Novel interactors of the Drosophila Survival Motor Neuron (SMN) Complex suggest its full conservation.</title>
        <authorList>
            <person name="Lanfranco M."/>
            <person name="Cacciottolo R."/>
            <person name="Borg R.M."/>
            <person name="Vassallo N."/>
            <person name="Juge F."/>
            <person name="Bordonne R."/>
            <person name="Cauchi R.J."/>
        </authorList>
    </citation>
    <scope>FUNCTION</scope>
    <scope>INTERACTION WITH SMN</scope>
    <scope>DISRUPTION PHENOTYPE</scope>
    <scope>NOMENCLATURE</scope>
</reference>
<reference evidence="6" key="5">
    <citation type="journal article" date="2019" name="G3 (Bethesda)">
        <title>Composition of the Survival Motor Neuron (SMN) Complex in Drosophila melanogaster.</title>
        <authorList>
            <person name="Matera A.G."/>
            <person name="Raimer A.C."/>
            <person name="Schmidt C.A."/>
            <person name="Kelly J.A."/>
            <person name="Droby G.N."/>
            <person name="Baillat D."/>
            <person name="Ten Have S."/>
            <person name="Lamond A.I."/>
            <person name="Wagner E.J."/>
            <person name="Gray K.M."/>
        </authorList>
    </citation>
    <scope>FUNCTION</scope>
    <scope>IDENTIFICATION IN THE SMN COMPLEX</scope>
    <scope>INTERACTION WITH SMN</scope>
    <scope>DISRUPTION PHENOTYPE</scope>
    <scope>IDENTIFICATION BY MASS SPECTROMETRY</scope>
    <scope>NOMENCLATURE</scope>
</reference>
<reference evidence="6" key="6">
    <citation type="journal article" date="2022" name="Am. J. Med. Genet. A">
        <title>Further delineation of GEMIN4 related neurodevelopmental disorder with microcephaly, cataract, and renal abnormalities syndrome.</title>
        <authorList>
            <person name="Altassan R."/>
            <person name="Qudair A."/>
            <person name="Alokaili R."/>
            <person name="Alhasan K."/>
            <person name="Faqeih E.A."/>
            <person name="Alhashem A."/>
            <person name="Alowain M."/>
            <person name="Alsayed M."/>
            <person name="Rahbeeni Z."/>
            <person name="Albadi L."/>
            <person name="Alkuraya F.S."/>
            <person name="Anderson E.N."/>
            <person name="Rajan D."/>
            <person name="Pandey U.B."/>
        </authorList>
    </citation>
    <scope>DISRUPTION PHENOTYPE</scope>
</reference>
<feature type="chain" id="PRO_0000460834" description="Gem-associated protein 4a">
    <location>
        <begin position="1"/>
        <end position="911"/>
    </location>
</feature>
<name>GEM4A_DROME</name>
<comment type="function">
    <text evidence="1 2">Component of the survival motor neuron (SMN) complex that catalyzes the assembly of small nuclear ribonucleoproteins (snRNPs), the building blocks of the spliceosome, and thereby plays an important role in the splicing of cellular pre-mRNAs (PubMed:28949413, PubMed:30563832). One of 3 almost identical paralogs (Glos/Gem4a, Gem4b and Gem4c), resulting from a genomic triplication, that have some redundant function (PubMed:30563832). Required for neuromuscular function and organismal viability (PubMed:28949413, PubMed:30563832).</text>
</comment>
<comment type="subunit">
    <text evidence="1 2">Component of the core survival motor neuron (SMN) complex composed of Smn, Gem2, Gem3, rig/Gem5 and one of 3 almost identical Gem4 paralogs encoded by Glos/Gem4a, Gem4b or Gem4c (PubMed:30563832). Interacts with Smn; the interaction is probably indirect (PubMed:28949413, PubMed:30563832).</text>
</comment>
<comment type="disruption phenotype">
    <text evidence="1 2 3">RNAi-mediated knockdown is pupal to adult lethal while simultaneous RNAi-mediated knockdown of all 3 Gem4 paralogs (Glos/Gem4a, Gem4b and Gem4c) is larval lethal; this phenotype does not appear to be due to loss of snRNP biogenesis (PubMed:28949413, PubMed:30563832, PubMed:35861185). Conditional RNAi-mediated knockdown in muscle cells or the central nervous system reduces adult viability and results in age-dependent progressive decline of the neuromuscular system; knockdown in muscle cells becomes fully adult lethal due to reduced motor function when combined with a hypomorphic Gem3 mutation (PubMed:28949413). Conditional RNAi-mediated knockdown in adults results in a reduction in climbing ability and lifespan; adults have decreased numbers of mature boutons and increased numbers of satellite boutons at the neuromuscular junction (PubMed:35861185).</text>
</comment>
<comment type="miscellaneous">
    <text evidence="4">'Gaulos' is the Phoenician word for a merchant boat. This name reflects the boat shaped expression pattern seen in stage 7-10 embryos.</text>
</comment>
<keyword id="KW-1185">Reference proteome</keyword>
<organism evidence="9">
    <name type="scientific">Drosophila melanogaster</name>
    <name type="common">Fruit fly</name>
    <dbReference type="NCBI Taxonomy" id="7227"/>
    <lineage>
        <taxon>Eukaryota</taxon>
        <taxon>Metazoa</taxon>
        <taxon>Ecdysozoa</taxon>
        <taxon>Arthropoda</taxon>
        <taxon>Hexapoda</taxon>
        <taxon>Insecta</taxon>
        <taxon>Pterygota</taxon>
        <taxon>Neoptera</taxon>
        <taxon>Endopterygota</taxon>
        <taxon>Diptera</taxon>
        <taxon>Brachycera</taxon>
        <taxon>Muscomorpha</taxon>
        <taxon>Ephydroidea</taxon>
        <taxon>Drosophilidae</taxon>
        <taxon>Drosophila</taxon>
        <taxon>Sophophora</taxon>
    </lineage>
</organism>
<gene>
    <name evidence="4 8" type="primary">Glos</name>
    <name evidence="5 8" type="synonym">Gem4a</name>
    <name evidence="4" type="synonym">Gemin4</name>
    <name evidence="8" type="ORF">CG2941</name>
</gene>
<dbReference type="EMBL" id="AE014298">
    <property type="protein sequence ID" value="AAF45908.2"/>
    <property type="molecule type" value="Genomic_DNA"/>
</dbReference>
<dbReference type="EMBL" id="AY119118">
    <property type="protein sequence ID" value="AAM50978.1"/>
    <property type="molecule type" value="mRNA"/>
</dbReference>
<dbReference type="EMBL" id="AE014298">
    <property type="protein sequence ID" value="AHN59319.1"/>
    <property type="molecule type" value="Genomic_DNA"/>
</dbReference>
<dbReference type="RefSeq" id="NP_001284848.1">
    <property type="nucleotide sequence ID" value="NM_001297919.1"/>
</dbReference>
<dbReference type="RefSeq" id="NP_570086.1">
    <property type="nucleotide sequence ID" value="NM_130730.2"/>
</dbReference>
<dbReference type="SMR" id="Q9W4N9"/>
<dbReference type="ComplexPortal" id="CPX-8008">
    <property type="entry name" value="Survival motor neuron complex, Gem4A variant"/>
</dbReference>
<dbReference type="FunCoup" id="Q9W4N9">
    <property type="interactions" value="5"/>
</dbReference>
<dbReference type="IntAct" id="Q9W4N9">
    <property type="interactions" value="7"/>
</dbReference>
<dbReference type="STRING" id="7227.FBpp0311755"/>
<dbReference type="PaxDb" id="7227-FBpp0070586"/>
<dbReference type="DNASU" id="31348"/>
<dbReference type="EnsemblMetazoa" id="FBtr0070613">
    <property type="protein sequence ID" value="FBpp0070586"/>
    <property type="gene ID" value="FBgn0029686"/>
</dbReference>
<dbReference type="EnsemblMetazoa" id="FBtr0345711">
    <property type="protein sequence ID" value="FBpp0311755"/>
    <property type="gene ID" value="FBgn0029686"/>
</dbReference>
<dbReference type="GeneID" id="31348"/>
<dbReference type="KEGG" id="dme:Dmel_CG2941"/>
<dbReference type="UCSC" id="CG2941-RA">
    <property type="organism name" value="d. melanogaster"/>
</dbReference>
<dbReference type="AGR" id="FB:FBgn0029686"/>
<dbReference type="CTD" id="31348"/>
<dbReference type="FlyBase" id="FBgn0029686">
    <property type="gene designation" value="Glos"/>
</dbReference>
<dbReference type="VEuPathDB" id="VectorBase:FBgn0029686"/>
<dbReference type="eggNOG" id="ENOG502SDT1">
    <property type="taxonomic scope" value="Eukaryota"/>
</dbReference>
<dbReference type="GeneTree" id="ENSGT00790000123991"/>
<dbReference type="HOGENOM" id="CLU_014736_0_0_1"/>
<dbReference type="InParanoid" id="Q9W4N9"/>
<dbReference type="OMA" id="YWSGNEE"/>
<dbReference type="OrthoDB" id="6588253at2759"/>
<dbReference type="BioGRID-ORCS" id="31348">
    <property type="hits" value="0 hits in 1 CRISPR screen"/>
</dbReference>
<dbReference type="GenomeRNAi" id="31348"/>
<dbReference type="Proteomes" id="UP000000803">
    <property type="component" value="Chromosome X"/>
</dbReference>
<dbReference type="Bgee" id="FBgn0029686">
    <property type="expression patterns" value="Expressed in cleaving embryo and 51 other cell types or tissues"/>
</dbReference>
<dbReference type="GO" id="GO:0032797">
    <property type="term" value="C:SMN complex"/>
    <property type="evidence" value="ECO:0000314"/>
    <property type="project" value="FlyBase"/>
</dbReference>
<accession>Q9W4N9</accession>